<geneLocation type="mitochondrion"/>
<protein>
    <recommendedName>
        <fullName evidence="2">NADH-ubiquinone oxidoreductase chain 2</fullName>
        <ecNumber>7.1.1.2</ecNumber>
    </recommendedName>
    <alternativeName>
        <fullName>NADH dehydrogenase subunit 2</fullName>
    </alternativeName>
</protein>
<accession>Q2TQ14</accession>
<sequence>MNPMIFIILLATIMLGSSIVMMSSHWFMTWLGFEMNMMAIVPVLMKKYSPRSMEAATKYFLTQATASMILMLAIIINLMYSGQWTIANMENHTASMLITIALVMKLGLAPFHFWVPEVTQGIPLSSGLILLTWQKIAPLSLLYQIHSSINMELFLTMSLLSIVIGGWGGLNQTQLRKIMAYSSIGHMGWMMAIMNYNPNLSFLNLLVYILMTSSMFALLIFSSTTSTLSLSLAWNKTPIIATMSLIILLSLGGLPPLTGFMPKWMIIQELTKNNSTILPTLMAISALLNLFFYIRLTYSTALTMFPTMNNMKLTWQFQNTNILPMILPLITISTLALPLTPLFLMLN</sequence>
<proteinExistence type="inferred from homology"/>
<keyword id="KW-0249">Electron transport</keyword>
<keyword id="KW-0472">Membrane</keyword>
<keyword id="KW-0496">Mitochondrion</keyword>
<keyword id="KW-0999">Mitochondrion inner membrane</keyword>
<keyword id="KW-0520">NAD</keyword>
<keyword id="KW-0679">Respiratory chain</keyword>
<keyword id="KW-1278">Translocase</keyword>
<keyword id="KW-0812">Transmembrane</keyword>
<keyword id="KW-1133">Transmembrane helix</keyword>
<keyword id="KW-0813">Transport</keyword>
<keyword id="KW-0830">Ubiquinone</keyword>
<evidence type="ECO:0000250" key="1"/>
<evidence type="ECO:0000250" key="2">
    <source>
        <dbReference type="UniProtKB" id="P03891"/>
    </source>
</evidence>
<evidence type="ECO:0000255" key="3"/>
<evidence type="ECO:0000305" key="4"/>
<organism>
    <name type="scientific">Crocidura hildegardeae</name>
    <name type="common">Hildegarde's shrew</name>
    <dbReference type="NCBI Taxonomy" id="148965"/>
    <lineage>
        <taxon>Eukaryota</taxon>
        <taxon>Metazoa</taxon>
        <taxon>Chordata</taxon>
        <taxon>Craniata</taxon>
        <taxon>Vertebrata</taxon>
        <taxon>Euteleostomi</taxon>
        <taxon>Mammalia</taxon>
        <taxon>Eutheria</taxon>
        <taxon>Laurasiatheria</taxon>
        <taxon>Eulipotyphla</taxon>
        <taxon>Soricidae</taxon>
        <taxon>Crocidurinae</taxon>
        <taxon>Crocidura</taxon>
    </lineage>
</organism>
<feature type="chain" id="PRO_0000226703" description="NADH-ubiquinone oxidoreductase chain 2">
    <location>
        <begin position="1"/>
        <end position="347"/>
    </location>
</feature>
<feature type="transmembrane region" description="Helical" evidence="3">
    <location>
        <begin position="3"/>
        <end position="23"/>
    </location>
</feature>
<feature type="transmembrane region" description="Helical" evidence="3">
    <location>
        <begin position="25"/>
        <end position="45"/>
    </location>
</feature>
<feature type="transmembrane region" description="Helical" evidence="3">
    <location>
        <begin position="59"/>
        <end position="79"/>
    </location>
</feature>
<feature type="transmembrane region" description="Helical" evidence="3">
    <location>
        <begin position="96"/>
        <end position="116"/>
    </location>
</feature>
<feature type="transmembrane region" description="Helical" evidence="3">
    <location>
        <begin position="122"/>
        <end position="142"/>
    </location>
</feature>
<feature type="transmembrane region" description="Helical" evidence="3">
    <location>
        <begin position="149"/>
        <end position="169"/>
    </location>
</feature>
<feature type="transmembrane region" description="Helical" evidence="3">
    <location>
        <begin position="201"/>
        <end position="221"/>
    </location>
</feature>
<feature type="transmembrane region" description="Helical" evidence="3">
    <location>
        <begin position="239"/>
        <end position="259"/>
    </location>
</feature>
<feature type="transmembrane region" description="Helical" evidence="3">
    <location>
        <begin position="274"/>
        <end position="294"/>
    </location>
</feature>
<feature type="transmembrane region" description="Helical" evidence="3">
    <location>
        <begin position="326"/>
        <end position="346"/>
    </location>
</feature>
<comment type="function">
    <text evidence="1">Core subunit of the mitochondrial membrane respiratory chain NADH dehydrogenase (Complex I) that is believed to belong to the minimal assembly required for catalysis. Complex I functions in the transfer of electrons from NADH to the respiratory chain. The immediate electron acceptor for the enzyme is believed to be ubiquinone (By similarity).</text>
</comment>
<comment type="catalytic activity">
    <reaction>
        <text>a ubiquinone + NADH + 5 H(+)(in) = a ubiquinol + NAD(+) + 4 H(+)(out)</text>
        <dbReference type="Rhea" id="RHEA:29091"/>
        <dbReference type="Rhea" id="RHEA-COMP:9565"/>
        <dbReference type="Rhea" id="RHEA-COMP:9566"/>
        <dbReference type="ChEBI" id="CHEBI:15378"/>
        <dbReference type="ChEBI" id="CHEBI:16389"/>
        <dbReference type="ChEBI" id="CHEBI:17976"/>
        <dbReference type="ChEBI" id="CHEBI:57540"/>
        <dbReference type="ChEBI" id="CHEBI:57945"/>
        <dbReference type="EC" id="7.1.1.2"/>
    </reaction>
</comment>
<comment type="subunit">
    <text evidence="2">Core subunit of respiratory chain NADH dehydrogenase (Complex I) which is composed of 45 different subunits. Interacts with TMEM242.</text>
</comment>
<comment type="subcellular location">
    <subcellularLocation>
        <location>Mitochondrion inner membrane</location>
        <topology>Multi-pass membrane protein</topology>
    </subcellularLocation>
</comment>
<comment type="similarity">
    <text evidence="4">Belongs to the complex I subunit 2 family.</text>
</comment>
<dbReference type="EC" id="7.1.1.2"/>
<dbReference type="EMBL" id="AY691838">
    <property type="protein sequence ID" value="AAW29761.1"/>
    <property type="molecule type" value="Genomic_DNA"/>
</dbReference>
<dbReference type="SMR" id="Q2TQ14"/>
<dbReference type="GO" id="GO:0005743">
    <property type="term" value="C:mitochondrial inner membrane"/>
    <property type="evidence" value="ECO:0007669"/>
    <property type="project" value="UniProtKB-SubCell"/>
</dbReference>
<dbReference type="GO" id="GO:0008137">
    <property type="term" value="F:NADH dehydrogenase (ubiquinone) activity"/>
    <property type="evidence" value="ECO:0007669"/>
    <property type="project" value="UniProtKB-EC"/>
</dbReference>
<dbReference type="GO" id="GO:0006120">
    <property type="term" value="P:mitochondrial electron transport, NADH to ubiquinone"/>
    <property type="evidence" value="ECO:0007669"/>
    <property type="project" value="InterPro"/>
</dbReference>
<dbReference type="InterPro" id="IPR050175">
    <property type="entry name" value="Complex_I_Subunit_2"/>
</dbReference>
<dbReference type="InterPro" id="IPR010933">
    <property type="entry name" value="NADH_DH_su2_C"/>
</dbReference>
<dbReference type="InterPro" id="IPR003917">
    <property type="entry name" value="NADH_UbQ_OxRdtase_chain2"/>
</dbReference>
<dbReference type="InterPro" id="IPR001750">
    <property type="entry name" value="ND/Mrp_TM"/>
</dbReference>
<dbReference type="PANTHER" id="PTHR46552">
    <property type="entry name" value="NADH-UBIQUINONE OXIDOREDUCTASE CHAIN 2"/>
    <property type="match status" value="1"/>
</dbReference>
<dbReference type="PANTHER" id="PTHR46552:SF1">
    <property type="entry name" value="NADH-UBIQUINONE OXIDOREDUCTASE CHAIN 2"/>
    <property type="match status" value="1"/>
</dbReference>
<dbReference type="Pfam" id="PF06444">
    <property type="entry name" value="NADH_dehy_S2_C"/>
    <property type="match status" value="1"/>
</dbReference>
<dbReference type="Pfam" id="PF00361">
    <property type="entry name" value="Proton_antipo_M"/>
    <property type="match status" value="1"/>
</dbReference>
<dbReference type="PRINTS" id="PR01436">
    <property type="entry name" value="NADHDHGNASE2"/>
</dbReference>
<reference key="1">
    <citation type="submission" date="2004-07" db="EMBL/GenBank/DDBJ databases">
        <title>Phylogeny, phylogeography, and geographic variation of Sylvisorex howelli, an endemic shrew of the Eastern Arc mountains.</title>
        <authorList>
            <person name="Stanley W.T."/>
            <person name="Olson L.E."/>
        </authorList>
    </citation>
    <scope>NUCLEOTIDE SEQUENCE [GENOMIC DNA]</scope>
</reference>
<name>NU2M_CROHI</name>
<gene>
    <name evidence="2" type="primary">MT-ND2</name>
    <name type="synonym">MTND2</name>
    <name type="synonym">NADH2</name>
    <name type="synonym">ND2</name>
</gene>